<name>PSTB1_PSEU2</name>
<comment type="function">
    <text evidence="1">Part of the ABC transporter complex PstSACB involved in phosphate import. Responsible for energy coupling to the transport system.</text>
</comment>
<comment type="catalytic activity">
    <reaction evidence="1">
        <text>phosphate(out) + ATP + H2O = ADP + 2 phosphate(in) + H(+)</text>
        <dbReference type="Rhea" id="RHEA:24440"/>
        <dbReference type="ChEBI" id="CHEBI:15377"/>
        <dbReference type="ChEBI" id="CHEBI:15378"/>
        <dbReference type="ChEBI" id="CHEBI:30616"/>
        <dbReference type="ChEBI" id="CHEBI:43474"/>
        <dbReference type="ChEBI" id="CHEBI:456216"/>
        <dbReference type="EC" id="7.3.2.1"/>
    </reaction>
</comment>
<comment type="subunit">
    <text evidence="1">The complex is composed of two ATP-binding proteins (PstB), two transmembrane proteins (PstC and PstA) and a solute-binding protein (PstS).</text>
</comment>
<comment type="subcellular location">
    <subcellularLocation>
        <location evidence="1">Cell inner membrane</location>
        <topology evidence="1">Peripheral membrane protein</topology>
    </subcellularLocation>
</comment>
<comment type="similarity">
    <text evidence="1">Belongs to the ABC transporter superfamily. Phosphate importer (TC 3.A.1.7) family.</text>
</comment>
<proteinExistence type="inferred from homology"/>
<protein>
    <recommendedName>
        <fullName evidence="1">Phosphate import ATP-binding protein PstB 1</fullName>
        <ecNumber evidence="1">7.3.2.1</ecNumber>
    </recommendedName>
    <alternativeName>
        <fullName evidence="1">ABC phosphate transporter 1</fullName>
    </alternativeName>
    <alternativeName>
        <fullName evidence="1">Phosphate-transporting ATPase 1</fullName>
    </alternativeName>
</protein>
<accession>Q4ZRT7</accession>
<organism>
    <name type="scientific">Pseudomonas syringae pv. syringae (strain B728a)</name>
    <dbReference type="NCBI Taxonomy" id="205918"/>
    <lineage>
        <taxon>Bacteria</taxon>
        <taxon>Pseudomonadati</taxon>
        <taxon>Pseudomonadota</taxon>
        <taxon>Gammaproteobacteria</taxon>
        <taxon>Pseudomonadales</taxon>
        <taxon>Pseudomonadaceae</taxon>
        <taxon>Pseudomonas</taxon>
        <taxon>Pseudomonas syringae</taxon>
    </lineage>
</organism>
<gene>
    <name evidence="1" type="primary">pstB1</name>
    <name type="ordered locus">Psyr_3103</name>
</gene>
<feature type="chain" id="PRO_0000272501" description="Phosphate import ATP-binding protein PstB 1">
    <location>
        <begin position="1"/>
        <end position="259"/>
    </location>
</feature>
<feature type="domain" description="ABC transporter" evidence="1">
    <location>
        <begin position="13"/>
        <end position="254"/>
    </location>
</feature>
<feature type="binding site" evidence="1">
    <location>
        <begin position="45"/>
        <end position="52"/>
    </location>
    <ligand>
        <name>ATP</name>
        <dbReference type="ChEBI" id="CHEBI:30616"/>
    </ligand>
</feature>
<dbReference type="EC" id="7.3.2.1" evidence="1"/>
<dbReference type="EMBL" id="CP000075">
    <property type="protein sequence ID" value="AAY38135.1"/>
    <property type="molecule type" value="Genomic_DNA"/>
</dbReference>
<dbReference type="RefSeq" id="YP_236173.1">
    <property type="nucleotide sequence ID" value="NC_007005.1"/>
</dbReference>
<dbReference type="SMR" id="Q4ZRT7"/>
<dbReference type="STRING" id="205918.Psyr_3103"/>
<dbReference type="KEGG" id="psb:Psyr_3103"/>
<dbReference type="PATRIC" id="fig|205918.7.peg.3167"/>
<dbReference type="eggNOG" id="COG1117">
    <property type="taxonomic scope" value="Bacteria"/>
</dbReference>
<dbReference type="HOGENOM" id="CLU_000604_1_22_6"/>
<dbReference type="OrthoDB" id="9802264at2"/>
<dbReference type="Proteomes" id="UP000000426">
    <property type="component" value="Chromosome"/>
</dbReference>
<dbReference type="GO" id="GO:0005886">
    <property type="term" value="C:plasma membrane"/>
    <property type="evidence" value="ECO:0007669"/>
    <property type="project" value="UniProtKB-SubCell"/>
</dbReference>
<dbReference type="GO" id="GO:0005524">
    <property type="term" value="F:ATP binding"/>
    <property type="evidence" value="ECO:0007669"/>
    <property type="project" value="UniProtKB-KW"/>
</dbReference>
<dbReference type="GO" id="GO:0016887">
    <property type="term" value="F:ATP hydrolysis activity"/>
    <property type="evidence" value="ECO:0007669"/>
    <property type="project" value="InterPro"/>
</dbReference>
<dbReference type="GO" id="GO:0015415">
    <property type="term" value="F:ATPase-coupled phosphate ion transmembrane transporter activity"/>
    <property type="evidence" value="ECO:0007669"/>
    <property type="project" value="UniProtKB-EC"/>
</dbReference>
<dbReference type="GO" id="GO:0035435">
    <property type="term" value="P:phosphate ion transmembrane transport"/>
    <property type="evidence" value="ECO:0007669"/>
    <property type="project" value="InterPro"/>
</dbReference>
<dbReference type="CDD" id="cd03260">
    <property type="entry name" value="ABC_PstB_phosphate_transporter"/>
    <property type="match status" value="1"/>
</dbReference>
<dbReference type="FunFam" id="3.40.50.300:FF:000132">
    <property type="entry name" value="Phosphate import ATP-binding protein PstB"/>
    <property type="match status" value="1"/>
</dbReference>
<dbReference type="Gene3D" id="3.40.50.300">
    <property type="entry name" value="P-loop containing nucleotide triphosphate hydrolases"/>
    <property type="match status" value="1"/>
</dbReference>
<dbReference type="InterPro" id="IPR003593">
    <property type="entry name" value="AAA+_ATPase"/>
</dbReference>
<dbReference type="InterPro" id="IPR003439">
    <property type="entry name" value="ABC_transporter-like_ATP-bd"/>
</dbReference>
<dbReference type="InterPro" id="IPR017871">
    <property type="entry name" value="ABC_transporter-like_CS"/>
</dbReference>
<dbReference type="InterPro" id="IPR027417">
    <property type="entry name" value="P-loop_NTPase"/>
</dbReference>
<dbReference type="InterPro" id="IPR005670">
    <property type="entry name" value="PstB-like"/>
</dbReference>
<dbReference type="NCBIfam" id="TIGR00972">
    <property type="entry name" value="3a0107s01c2"/>
    <property type="match status" value="1"/>
</dbReference>
<dbReference type="PANTHER" id="PTHR43423">
    <property type="entry name" value="ABC TRANSPORTER I FAMILY MEMBER 17"/>
    <property type="match status" value="1"/>
</dbReference>
<dbReference type="PANTHER" id="PTHR43423:SF3">
    <property type="entry name" value="PHOSPHATE IMPORT ATP-BINDING PROTEIN PSTB"/>
    <property type="match status" value="1"/>
</dbReference>
<dbReference type="Pfam" id="PF00005">
    <property type="entry name" value="ABC_tran"/>
    <property type="match status" value="1"/>
</dbReference>
<dbReference type="SMART" id="SM00382">
    <property type="entry name" value="AAA"/>
    <property type="match status" value="1"/>
</dbReference>
<dbReference type="SUPFAM" id="SSF52540">
    <property type="entry name" value="P-loop containing nucleoside triphosphate hydrolases"/>
    <property type="match status" value="1"/>
</dbReference>
<dbReference type="PROSITE" id="PS00211">
    <property type="entry name" value="ABC_TRANSPORTER_1"/>
    <property type="match status" value="1"/>
</dbReference>
<dbReference type="PROSITE" id="PS50893">
    <property type="entry name" value="ABC_TRANSPORTER_2"/>
    <property type="match status" value="1"/>
</dbReference>
<dbReference type="PROSITE" id="PS51238">
    <property type="entry name" value="PSTB"/>
    <property type="match status" value="1"/>
</dbReference>
<sequence length="259" mass="29333">MNNLSLANEKTKIQVRGLEFFYNNQKSLKSIDMTIPEKRITAIIGPSGCGKSTLLRVFNRIYAMYPKQEARGEVLLNGENILAPGYSMNRLRSHVGMVFQKPVPFPMSIYDNISYAIKHHEKLSRREMEDRVEQALRGAALWDEVKDKLKQSATGLSGGQQQRLCIARTIALRPQVLLLDEPTSALDPISTGRIEQLITELKEQFTVIIVTHNMQQAARCSDYTAFMFMGELIEHGDTDTIFTKPSKTQTEDYITGRFG</sequence>
<evidence type="ECO:0000255" key="1">
    <source>
        <dbReference type="HAMAP-Rule" id="MF_01702"/>
    </source>
</evidence>
<reference key="1">
    <citation type="journal article" date="2005" name="Proc. Natl. Acad. Sci. U.S.A.">
        <title>Comparison of the complete genome sequences of Pseudomonas syringae pv. syringae B728a and pv. tomato DC3000.</title>
        <authorList>
            <person name="Feil H."/>
            <person name="Feil W.S."/>
            <person name="Chain P."/>
            <person name="Larimer F."/>
            <person name="Dibartolo G."/>
            <person name="Copeland A."/>
            <person name="Lykidis A."/>
            <person name="Trong S."/>
            <person name="Nolan M."/>
            <person name="Goltsman E."/>
            <person name="Thiel J."/>
            <person name="Malfatti S."/>
            <person name="Loper J.E."/>
            <person name="Lapidus A."/>
            <person name="Detter J.C."/>
            <person name="Land M."/>
            <person name="Richardson P.M."/>
            <person name="Kyrpides N.C."/>
            <person name="Ivanova N."/>
            <person name="Lindow S.E."/>
        </authorList>
    </citation>
    <scope>NUCLEOTIDE SEQUENCE [LARGE SCALE GENOMIC DNA]</scope>
    <source>
        <strain>B728a</strain>
    </source>
</reference>
<keyword id="KW-0067">ATP-binding</keyword>
<keyword id="KW-0997">Cell inner membrane</keyword>
<keyword id="KW-1003">Cell membrane</keyword>
<keyword id="KW-0472">Membrane</keyword>
<keyword id="KW-0547">Nucleotide-binding</keyword>
<keyword id="KW-0592">Phosphate transport</keyword>
<keyword id="KW-1278">Translocase</keyword>
<keyword id="KW-0813">Transport</keyword>